<reference key="1">
    <citation type="journal article" date="2021" name="J. Am. Chem. Soc.">
        <title>Biosynthesis of the Immunosuppressant (-)-FR901483.</title>
        <authorList>
            <person name="Zhang Z."/>
            <person name="Tamura Y."/>
            <person name="Tang M."/>
            <person name="Qiao T."/>
            <person name="Sato M."/>
            <person name="Otsu Y."/>
            <person name="Sasamura S."/>
            <person name="Taniguchi M."/>
            <person name="Watanabe K."/>
            <person name="Tang Y."/>
        </authorList>
    </citation>
    <scope>NUCLEOTIDE SEQUENCE [GENOMIC DNA]</scope>
    <scope>FUNCTION</scope>
    <scope>CATALYTIC ACTIVITY</scope>
    <scope>PATHWAY</scope>
    <source>
        <strain>11231</strain>
    </source>
</reference>
<sequence>MAKHITSSEYDAVIATAYCYVEAMEKGSSKRAKEGFHPDGGIYGYVDGEFKGGSISNLFDFLDQSPEGHKIKAHLDVIAMTPTTAIVKTEVEMNPPETDYTDFLGMVKIDGKWQIVSKIFHSYPR</sequence>
<evidence type="ECO:0000269" key="1">
    <source>
    </source>
</evidence>
<evidence type="ECO:0000303" key="2">
    <source>
    </source>
</evidence>
<proteinExistence type="evidence at protein level"/>
<organism>
    <name type="scientific">Cladobotryum sp</name>
    <dbReference type="NCBI Taxonomy" id="2040732"/>
    <lineage>
        <taxon>Eukaryota</taxon>
        <taxon>Fungi</taxon>
        <taxon>Dikarya</taxon>
        <taxon>Ascomycota</taxon>
        <taxon>Pezizomycotina</taxon>
        <taxon>Sordariomycetes</taxon>
        <taxon>Hypocreomycetidae</taxon>
        <taxon>Hypocreales</taxon>
        <taxon>Hypocreaceae</taxon>
        <taxon>Cladobotryum</taxon>
    </lineage>
</organism>
<gene>
    <name evidence="2" type="primary">FrzH</name>
</gene>
<name>FRZH_CLASX</name>
<protein>
    <recommendedName>
        <fullName evidence="2">Aldolase FrzH</fullName>
        <ecNumber evidence="1">5.5.1.-</ecNumber>
    </recommendedName>
    <alternativeName>
        <fullName evidence="2">FR901483 biosynthesis clusters protein H</fullName>
    </alternativeName>
</protein>
<comment type="function">
    <text evidence="1">Aldolase; part of the gene cluster that mediates the biosynthesis of the alkaloid (-)-FR901483, a potent immunosuppressant that shows efficacy in animal models and a probable inhibitor of purine nucleotide biosynthesis by targeting phosphoribosylpyrophosphate amidotransferase (PPAT) (PubMed:33372776). Within the pathway, FrzH is a new kind of aldolase with no similarities to known aldolases, and which catalyzes the intramolecular aldol condensation via formation of a C9-C3' bond to yield an aza-tricyclic product (PubMed:33372776). The biosynthesis of (-)-FR901483 starts with the condensation of two L-tyrosines to yield (S,S)-dityrosyl-piperazine. This process occurs in 3 steps with the non-canonical nonribosomal peptide synthetase FrzA catalyzing the reduction of L-tyrosine into L-tyrosinal, the spontaneous condensation of 2 L-tyrosinal units, and the subsequent reduction by the NmrA-like family domain-containing oxidoreductase FrzB. The cytochrome P450 monooxygenase FrzC then performs coupling between N10 and C1' to morph the piperazine into a 1,4-diazabicyclo[3.2.1]octane spiro-fused to a 2,5-cyclohexadienone. The dienone portion is further reduced to cyclohexanone by the flavin-dependent reductase FrzD. The methyltranserases (MTs) FrzE and FrzF are then involved in the methylation at the C10' amine and the C4 phenolic oxygen, respectively. The order of the two MTs appear to be interchangeable. Cleavage of the C9-N10' bond by the dioxygenase FrzG then leads to formation of a conjugated iminium. In addition to the oxidation of C9, an additional dehydrogenation between C7 and C8 can occur to give a likely shunt product. The next biosynthetic step is the intramolecular aldol condensation catalyzed by the newly identified aldolase FrzH to yield an aza-tricyclic product with the formation of a C9-C3' bond (PubMed:33372776). The short-chain dehydrogenase/reductase FrzI then produces dephospho-(-)-FR901483 that is phosphorylated at C4'-OH into (-)-FR901483 by the phosphotransferase FrzJ (PubMed:33372776).</text>
</comment>
<comment type="catalytic activity">
    <reaction evidence="1">
        <text>(2S)-3-(4-methoxyphenyl)-2-[(3S)-3-(methylamino)-8-oxo-1-azaspiro[4.5]decan-1-yl]propanal = (1S,3S,6S,7S,8R)-7-hydroxy-6-[(4-methoxyphenyl)methyl]-3-(methylamino)-5-azatricyclo[6.3.1.0(1,5)]dodecan-9-one</text>
        <dbReference type="Rhea" id="RHEA:83607"/>
        <dbReference type="ChEBI" id="CHEBI:233179"/>
        <dbReference type="ChEBI" id="CHEBI:233181"/>
    </reaction>
    <physiologicalReaction direction="left-to-right" evidence="1">
        <dbReference type="Rhea" id="RHEA:83608"/>
    </physiologicalReaction>
</comment>
<comment type="pathway">
    <text evidence="1">Secondary metabolite biosynthesis.</text>
</comment>
<keyword id="KW-0413">Isomerase</keyword>
<dbReference type="EC" id="5.5.1.-" evidence="1"/>
<dbReference type="EMBL" id="MW322046">
    <property type="protein sequence ID" value="QQO98478.1"/>
    <property type="molecule type" value="Genomic_DNA"/>
</dbReference>
<dbReference type="Gene3D" id="3.10.450.50">
    <property type="match status" value="1"/>
</dbReference>
<dbReference type="InterPro" id="IPR032710">
    <property type="entry name" value="NTF2-like_dom_sf"/>
</dbReference>
<dbReference type="InterPro" id="IPR039437">
    <property type="entry name" value="Put_lumazine-bd"/>
</dbReference>
<dbReference type="Pfam" id="PF12893">
    <property type="entry name" value="Lumazine_bd_2"/>
    <property type="match status" value="1"/>
</dbReference>
<dbReference type="SUPFAM" id="SSF54427">
    <property type="entry name" value="NTF2-like"/>
    <property type="match status" value="1"/>
</dbReference>
<feature type="chain" id="PRO_0000462335" description="Aldolase FrzH">
    <location>
        <begin position="1"/>
        <end position="125"/>
    </location>
</feature>
<accession>A0A7T8F1L1</accession>